<sequence length="361" mass="41303">MTQPTLFIDRDGTLIDEPKTDFQIDSLEKLKLERNVIPALLKLKDHYRFVMVSNQDGLGTDSFPQENFDKPHNAMLEIFRSQGIEFDAILICPHKPEDNCDCRKPKIKLLKKYIDKKLFDPAHSFVIGDRATDVQLAENLGIQALQYHPEKLDWDLIVEKLLPKTTACKRPPRYAEVVRTTKETDIKVQVWLDETGVNQISTGVGFFDHMLDQIATHGGFRMNVQCKGDLWIDEHHTVEDTALALGTALKQALGDKRGIQRFGFVLPMDECKAECTMDLSGRPYFKFKAKFKREKVGDFSTEMTEHFFQSIAYTLMATLHLKTQGDNDHHKIESLFKVFGRTLRQCIKVEGNELPSSKGVL</sequence>
<dbReference type="EC" id="3.1.3.15" evidence="1"/>
<dbReference type="EC" id="4.2.1.19" evidence="1"/>
<dbReference type="EMBL" id="CP000687">
    <property type="protein sequence ID" value="ABY70618.1"/>
    <property type="molecule type" value="Genomic_DNA"/>
</dbReference>
<dbReference type="RefSeq" id="WP_012263490.1">
    <property type="nucleotide sequence ID" value="NC_010278.1"/>
</dbReference>
<dbReference type="SMR" id="B0BU51"/>
<dbReference type="KEGG" id="apj:APJL_2073"/>
<dbReference type="HOGENOM" id="CLU_044308_0_0_6"/>
<dbReference type="UniPathway" id="UPA00031">
    <property type="reaction ID" value="UER00011"/>
</dbReference>
<dbReference type="UniPathway" id="UPA00031">
    <property type="reaction ID" value="UER00013"/>
</dbReference>
<dbReference type="Proteomes" id="UP000008547">
    <property type="component" value="Chromosome"/>
</dbReference>
<dbReference type="GO" id="GO:0005737">
    <property type="term" value="C:cytoplasm"/>
    <property type="evidence" value="ECO:0007669"/>
    <property type="project" value="UniProtKB-SubCell"/>
</dbReference>
<dbReference type="GO" id="GO:0004401">
    <property type="term" value="F:histidinol-phosphatase activity"/>
    <property type="evidence" value="ECO:0007669"/>
    <property type="project" value="UniProtKB-UniRule"/>
</dbReference>
<dbReference type="GO" id="GO:0004424">
    <property type="term" value="F:imidazoleglycerol-phosphate dehydratase activity"/>
    <property type="evidence" value="ECO:0007669"/>
    <property type="project" value="UniProtKB-UniRule"/>
</dbReference>
<dbReference type="GO" id="GO:0046872">
    <property type="term" value="F:metal ion binding"/>
    <property type="evidence" value="ECO:0007669"/>
    <property type="project" value="UniProtKB-KW"/>
</dbReference>
<dbReference type="GO" id="GO:0000105">
    <property type="term" value="P:L-histidine biosynthetic process"/>
    <property type="evidence" value="ECO:0007669"/>
    <property type="project" value="UniProtKB-UniRule"/>
</dbReference>
<dbReference type="CDD" id="cd07503">
    <property type="entry name" value="HAD_HisB-N"/>
    <property type="match status" value="1"/>
</dbReference>
<dbReference type="CDD" id="cd07914">
    <property type="entry name" value="IGPD"/>
    <property type="match status" value="1"/>
</dbReference>
<dbReference type="FunFam" id="3.40.50.1000:FF:000061">
    <property type="entry name" value="Histidine biosynthesis bifunctional protein HisB"/>
    <property type="match status" value="1"/>
</dbReference>
<dbReference type="FunFam" id="3.30.230.40:FF:000001">
    <property type="entry name" value="Imidazoleglycerol-phosphate dehydratase HisB"/>
    <property type="match status" value="1"/>
</dbReference>
<dbReference type="FunFam" id="3.30.230.40:FF:000003">
    <property type="entry name" value="Imidazoleglycerol-phosphate dehydratase HisB"/>
    <property type="match status" value="1"/>
</dbReference>
<dbReference type="Gene3D" id="3.40.50.1000">
    <property type="entry name" value="HAD superfamily/HAD-like"/>
    <property type="match status" value="1"/>
</dbReference>
<dbReference type="Gene3D" id="3.30.230.40">
    <property type="entry name" value="Imidazole glycerol phosphate dehydratase, domain 1"/>
    <property type="match status" value="2"/>
</dbReference>
<dbReference type="HAMAP" id="MF_01022">
    <property type="entry name" value="Bifunc_HisB"/>
    <property type="match status" value="1"/>
</dbReference>
<dbReference type="HAMAP" id="MF_00076">
    <property type="entry name" value="HisB"/>
    <property type="match status" value="1"/>
</dbReference>
<dbReference type="InterPro" id="IPR036412">
    <property type="entry name" value="HAD-like_sf"/>
</dbReference>
<dbReference type="InterPro" id="IPR006549">
    <property type="entry name" value="HAD-SF_hydro_IIIA"/>
</dbReference>
<dbReference type="InterPro" id="IPR023214">
    <property type="entry name" value="HAD_sf"/>
</dbReference>
<dbReference type="InterPro" id="IPR020566">
    <property type="entry name" value="His_synth_bifunc_HisB"/>
</dbReference>
<dbReference type="InterPro" id="IPR005954">
    <property type="entry name" value="HisB_N"/>
</dbReference>
<dbReference type="InterPro" id="IPR006543">
    <property type="entry name" value="Histidinol-phos"/>
</dbReference>
<dbReference type="InterPro" id="IPR038494">
    <property type="entry name" value="IGPD_sf"/>
</dbReference>
<dbReference type="InterPro" id="IPR000807">
    <property type="entry name" value="ImidazoleglycerolP_deHydtase"/>
</dbReference>
<dbReference type="InterPro" id="IPR020565">
    <property type="entry name" value="ImidazoleglycerP_deHydtase_CS"/>
</dbReference>
<dbReference type="InterPro" id="IPR020568">
    <property type="entry name" value="Ribosomal_Su5_D2-typ_SF"/>
</dbReference>
<dbReference type="NCBIfam" id="TIGR01662">
    <property type="entry name" value="HAD-SF-IIIA"/>
    <property type="match status" value="1"/>
</dbReference>
<dbReference type="NCBIfam" id="TIGR01261">
    <property type="entry name" value="hisB_Nterm"/>
    <property type="match status" value="1"/>
</dbReference>
<dbReference type="NCBIfam" id="TIGR01656">
    <property type="entry name" value="Histidinol-ppas"/>
    <property type="match status" value="1"/>
</dbReference>
<dbReference type="NCBIfam" id="NF002111">
    <property type="entry name" value="PRK00951.2-1"/>
    <property type="match status" value="1"/>
</dbReference>
<dbReference type="NCBIfam" id="NF002114">
    <property type="entry name" value="PRK00951.2-4"/>
    <property type="match status" value="1"/>
</dbReference>
<dbReference type="NCBIfam" id="NF003937">
    <property type="entry name" value="PRK05446.1"/>
    <property type="match status" value="1"/>
</dbReference>
<dbReference type="PANTHER" id="PTHR23133:SF2">
    <property type="entry name" value="IMIDAZOLEGLYCEROL-PHOSPHATE DEHYDRATASE"/>
    <property type="match status" value="1"/>
</dbReference>
<dbReference type="PANTHER" id="PTHR23133">
    <property type="entry name" value="IMIDAZOLEGLYCEROL-PHOSPHATE DEHYDRATASE HIS7"/>
    <property type="match status" value="1"/>
</dbReference>
<dbReference type="Pfam" id="PF13242">
    <property type="entry name" value="Hydrolase_like"/>
    <property type="match status" value="1"/>
</dbReference>
<dbReference type="Pfam" id="PF00475">
    <property type="entry name" value="IGPD"/>
    <property type="match status" value="1"/>
</dbReference>
<dbReference type="SUPFAM" id="SSF56784">
    <property type="entry name" value="HAD-like"/>
    <property type="match status" value="1"/>
</dbReference>
<dbReference type="SUPFAM" id="SSF54211">
    <property type="entry name" value="Ribosomal protein S5 domain 2-like"/>
    <property type="match status" value="2"/>
</dbReference>
<dbReference type="PROSITE" id="PS00954">
    <property type="entry name" value="IGP_DEHYDRATASE_1"/>
    <property type="match status" value="1"/>
</dbReference>
<dbReference type="PROSITE" id="PS00955">
    <property type="entry name" value="IGP_DEHYDRATASE_2"/>
    <property type="match status" value="1"/>
</dbReference>
<proteinExistence type="inferred from homology"/>
<evidence type="ECO:0000255" key="1">
    <source>
        <dbReference type="HAMAP-Rule" id="MF_01022"/>
    </source>
</evidence>
<gene>
    <name evidence="1" type="primary">hisB</name>
    <name type="ordered locus">APJL_2073</name>
</gene>
<reference key="1">
    <citation type="journal article" date="2008" name="PLoS ONE">
        <title>Genome biology of Actinobacillus pleuropneumoniae JL03, an isolate of serotype 3 prevalent in China.</title>
        <authorList>
            <person name="Xu Z."/>
            <person name="Zhou Y."/>
            <person name="Li L."/>
            <person name="Zhou R."/>
            <person name="Xiao S."/>
            <person name="Wan Y."/>
            <person name="Zhang S."/>
            <person name="Wang K."/>
            <person name="Li W."/>
            <person name="Li L."/>
            <person name="Jin H."/>
            <person name="Kang M."/>
            <person name="Dalai B."/>
            <person name="Li T."/>
            <person name="Liu L."/>
            <person name="Cheng Y."/>
            <person name="Zhang L."/>
            <person name="Xu T."/>
            <person name="Zheng H."/>
            <person name="Pu S."/>
            <person name="Wang B."/>
            <person name="Gu W."/>
            <person name="Zhang X.L."/>
            <person name="Zhu G.-F."/>
            <person name="Wang S."/>
            <person name="Zhao G.-P."/>
            <person name="Chen H."/>
        </authorList>
    </citation>
    <scope>NUCLEOTIDE SEQUENCE [LARGE SCALE GENOMIC DNA]</scope>
    <source>
        <strain>JL03</strain>
    </source>
</reference>
<protein>
    <recommendedName>
        <fullName evidence="1">Histidine biosynthesis bifunctional protein HisB</fullName>
    </recommendedName>
    <domain>
        <recommendedName>
            <fullName evidence="1">Histidinol-phosphatase</fullName>
            <ecNumber evidence="1">3.1.3.15</ecNumber>
        </recommendedName>
    </domain>
    <domain>
        <recommendedName>
            <fullName evidence="1">Imidazoleglycerol-phosphate dehydratase</fullName>
            <shortName evidence="1">IGPD</shortName>
            <ecNumber evidence="1">4.2.1.19</ecNumber>
        </recommendedName>
    </domain>
</protein>
<organism>
    <name type="scientific">Actinobacillus pleuropneumoniae serotype 3 (strain JL03)</name>
    <dbReference type="NCBI Taxonomy" id="434271"/>
    <lineage>
        <taxon>Bacteria</taxon>
        <taxon>Pseudomonadati</taxon>
        <taxon>Pseudomonadota</taxon>
        <taxon>Gammaproteobacteria</taxon>
        <taxon>Pasteurellales</taxon>
        <taxon>Pasteurellaceae</taxon>
        <taxon>Actinobacillus</taxon>
    </lineage>
</organism>
<name>HIS7_ACTPJ</name>
<comment type="catalytic activity">
    <reaction evidence="1">
        <text>D-erythro-1-(imidazol-4-yl)glycerol 3-phosphate = 3-(imidazol-4-yl)-2-oxopropyl phosphate + H2O</text>
        <dbReference type="Rhea" id="RHEA:11040"/>
        <dbReference type="ChEBI" id="CHEBI:15377"/>
        <dbReference type="ChEBI" id="CHEBI:57766"/>
        <dbReference type="ChEBI" id="CHEBI:58278"/>
        <dbReference type="EC" id="4.2.1.19"/>
    </reaction>
</comment>
<comment type="catalytic activity">
    <reaction evidence="1">
        <text>L-histidinol phosphate + H2O = L-histidinol + phosphate</text>
        <dbReference type="Rhea" id="RHEA:14465"/>
        <dbReference type="ChEBI" id="CHEBI:15377"/>
        <dbReference type="ChEBI" id="CHEBI:43474"/>
        <dbReference type="ChEBI" id="CHEBI:57699"/>
        <dbReference type="ChEBI" id="CHEBI:57980"/>
        <dbReference type="EC" id="3.1.3.15"/>
    </reaction>
</comment>
<comment type="cofactor">
    <cofactor evidence="1">
        <name>Mg(2+)</name>
        <dbReference type="ChEBI" id="CHEBI:18420"/>
    </cofactor>
</comment>
<comment type="cofactor">
    <cofactor evidence="1">
        <name>Zn(2+)</name>
        <dbReference type="ChEBI" id="CHEBI:29105"/>
    </cofactor>
</comment>
<comment type="pathway">
    <text evidence="1">Amino-acid biosynthesis; L-histidine biosynthesis; L-histidine from 5-phospho-alpha-D-ribose 1-diphosphate: step 6/9.</text>
</comment>
<comment type="pathway">
    <text evidence="1">Amino-acid biosynthesis; L-histidine biosynthesis; L-histidine from 5-phospho-alpha-D-ribose 1-diphosphate: step 8/9.</text>
</comment>
<comment type="subcellular location">
    <subcellularLocation>
        <location evidence="1">Cytoplasm</location>
    </subcellularLocation>
</comment>
<comment type="similarity">
    <text evidence="1">In the N-terminal section; belongs to the histidinol-phosphatase family.</text>
</comment>
<comment type="similarity">
    <text evidence="1">In the C-terminal section; belongs to the imidazoleglycerol-phosphate dehydratase family.</text>
</comment>
<keyword id="KW-0028">Amino-acid biosynthesis</keyword>
<keyword id="KW-0963">Cytoplasm</keyword>
<keyword id="KW-0368">Histidine biosynthesis</keyword>
<keyword id="KW-0378">Hydrolase</keyword>
<keyword id="KW-0456">Lyase</keyword>
<keyword id="KW-0460">Magnesium</keyword>
<keyword id="KW-0479">Metal-binding</keyword>
<keyword id="KW-0511">Multifunctional enzyme</keyword>
<keyword id="KW-0862">Zinc</keyword>
<feature type="chain" id="PRO_1000135369" description="Histidine biosynthesis bifunctional protein HisB">
    <location>
        <begin position="1"/>
        <end position="361"/>
    </location>
</feature>
<feature type="region of interest" description="Histidinol-phosphatase" evidence="1">
    <location>
        <begin position="1"/>
        <end position="172"/>
    </location>
</feature>
<feature type="region of interest" description="Imidazoleglycerol-phosphate dehydratase" evidence="1">
    <location>
        <begin position="173"/>
        <end position="361"/>
    </location>
</feature>
<feature type="active site" description="Nucleophile" evidence="1">
    <location>
        <position position="9"/>
    </location>
</feature>
<feature type="active site" description="Proton donor" evidence="1">
    <location>
        <position position="11"/>
    </location>
</feature>
<feature type="binding site" evidence="1">
    <location>
        <position position="9"/>
    </location>
    <ligand>
        <name>Mg(2+)</name>
        <dbReference type="ChEBI" id="CHEBI:18420"/>
    </ligand>
</feature>
<feature type="binding site" evidence="1">
    <location>
        <position position="11"/>
    </location>
    <ligand>
        <name>Mg(2+)</name>
        <dbReference type="ChEBI" id="CHEBI:18420"/>
    </ligand>
</feature>
<feature type="binding site" evidence="1">
    <location>
        <position position="92"/>
    </location>
    <ligand>
        <name>Zn(2+)</name>
        <dbReference type="ChEBI" id="CHEBI:29105"/>
    </ligand>
</feature>
<feature type="binding site" evidence="1">
    <location>
        <position position="94"/>
    </location>
    <ligand>
        <name>Zn(2+)</name>
        <dbReference type="ChEBI" id="CHEBI:29105"/>
    </ligand>
</feature>
<feature type="binding site" evidence="1">
    <location>
        <position position="100"/>
    </location>
    <ligand>
        <name>Zn(2+)</name>
        <dbReference type="ChEBI" id="CHEBI:29105"/>
    </ligand>
</feature>
<feature type="binding site" evidence="1">
    <location>
        <position position="102"/>
    </location>
    <ligand>
        <name>Zn(2+)</name>
        <dbReference type="ChEBI" id="CHEBI:29105"/>
    </ligand>
</feature>
<feature type="binding site" evidence="1">
    <location>
        <position position="129"/>
    </location>
    <ligand>
        <name>Mg(2+)</name>
        <dbReference type="ChEBI" id="CHEBI:18420"/>
    </ligand>
</feature>
<accession>B0BU51</accession>